<sequence length="677" mass="76268">MTQVAKKILVTCALPYANGSIHLGHMLEHIQADVWVRYQRMRGHEVNFICADDAHGTPIMLKAQQLGITPEQMIGEMSQEHQTDFAGFNISYDNYHSTHSEENRQLSELIYSRLKENGFIKNRTISQLYDPEKGMFLPDRFVKGTCPKCKSPDQYGDNCEVCGATYSPTELIEPKSVVSGATPVMRDSEHFFFDLPSFSEMLQAWTRSGALQEQVANKMQEWFESGLQQWDISRDAPYFGFEIPNAPGKYFYVWLDAPIGYMGSFKNLCDKRGDSVSFDEYWKKDSTAELYHFIGKDIVYFHSLFWPAMLEGSNFRKPTNLFVHGYVTVNGAKMSKSRGTFIKASTWLNHFDADSLRYYYTAKLSSRIDDIDLNLEDFVQRVNADIVNKVVNLASRNAGFINKRFDGVLANELADPQLYKTFTDAAEVIGEAWESREFGKAVREIMALADLANRYVDEQAPWVVAKQEGRDADLQAICSMGINLFRVLMTYLKPVLPKLTERAEAFLNTELTWDGIQQPLLGHKVNPFKALYNRIDMKQVEALVEASKEEVKAAAAPVTGPLADDPIQETITFDDFAKVDLRVALIENAEFVEGSDKLLRLTLDLGGEKRNVFSGIRSAYPDPQALIGRHTIMVANLAPRKMRFGISEGMVMAAGPGGKDIFLLSPDAGAKPGHQVK</sequence>
<gene>
    <name evidence="1" type="primary">metG</name>
    <name type="ordered locus">EcolC_1533</name>
</gene>
<feature type="chain" id="PRO_1000075584" description="Methionine--tRNA ligase">
    <location>
        <begin position="1"/>
        <end position="677"/>
    </location>
</feature>
<feature type="domain" description="tRNA-binding" evidence="1">
    <location>
        <begin position="575"/>
        <end position="677"/>
    </location>
</feature>
<feature type="short sequence motif" description="'HIGH' region">
    <location>
        <begin position="15"/>
        <end position="25"/>
    </location>
</feature>
<feature type="short sequence motif" description="'KMSKS' region">
    <location>
        <begin position="333"/>
        <end position="337"/>
    </location>
</feature>
<feature type="binding site" evidence="1">
    <location>
        <position position="146"/>
    </location>
    <ligand>
        <name>Zn(2+)</name>
        <dbReference type="ChEBI" id="CHEBI:29105"/>
    </ligand>
</feature>
<feature type="binding site" evidence="1">
    <location>
        <position position="149"/>
    </location>
    <ligand>
        <name>Zn(2+)</name>
        <dbReference type="ChEBI" id="CHEBI:29105"/>
    </ligand>
</feature>
<feature type="binding site" evidence="1">
    <location>
        <position position="159"/>
    </location>
    <ligand>
        <name>Zn(2+)</name>
        <dbReference type="ChEBI" id="CHEBI:29105"/>
    </ligand>
</feature>
<feature type="binding site" evidence="1">
    <location>
        <position position="162"/>
    </location>
    <ligand>
        <name>Zn(2+)</name>
        <dbReference type="ChEBI" id="CHEBI:29105"/>
    </ligand>
</feature>
<feature type="binding site" evidence="1">
    <location>
        <position position="336"/>
    </location>
    <ligand>
        <name>ATP</name>
        <dbReference type="ChEBI" id="CHEBI:30616"/>
    </ligand>
</feature>
<keyword id="KW-0030">Aminoacyl-tRNA synthetase</keyword>
<keyword id="KW-0067">ATP-binding</keyword>
<keyword id="KW-0963">Cytoplasm</keyword>
<keyword id="KW-0436">Ligase</keyword>
<keyword id="KW-0479">Metal-binding</keyword>
<keyword id="KW-0547">Nucleotide-binding</keyword>
<keyword id="KW-0648">Protein biosynthesis</keyword>
<keyword id="KW-0694">RNA-binding</keyword>
<keyword id="KW-0820">tRNA-binding</keyword>
<keyword id="KW-0862">Zinc</keyword>
<name>SYM_ECOLC</name>
<proteinExistence type="inferred from homology"/>
<comment type="function">
    <text evidence="1">Is required not only for elongation of protein synthesis but also for the initiation of all mRNA translation through initiator tRNA(fMet) aminoacylation.</text>
</comment>
<comment type="catalytic activity">
    <reaction evidence="1">
        <text>tRNA(Met) + L-methionine + ATP = L-methionyl-tRNA(Met) + AMP + diphosphate</text>
        <dbReference type="Rhea" id="RHEA:13481"/>
        <dbReference type="Rhea" id="RHEA-COMP:9667"/>
        <dbReference type="Rhea" id="RHEA-COMP:9698"/>
        <dbReference type="ChEBI" id="CHEBI:30616"/>
        <dbReference type="ChEBI" id="CHEBI:33019"/>
        <dbReference type="ChEBI" id="CHEBI:57844"/>
        <dbReference type="ChEBI" id="CHEBI:78442"/>
        <dbReference type="ChEBI" id="CHEBI:78530"/>
        <dbReference type="ChEBI" id="CHEBI:456215"/>
        <dbReference type="EC" id="6.1.1.10"/>
    </reaction>
</comment>
<comment type="cofactor">
    <cofactor evidence="1">
        <name>Zn(2+)</name>
        <dbReference type="ChEBI" id="CHEBI:29105"/>
    </cofactor>
    <text evidence="1">Binds 1 zinc ion per subunit.</text>
</comment>
<comment type="subunit">
    <text evidence="1">Homodimer.</text>
</comment>
<comment type="subcellular location">
    <subcellularLocation>
        <location evidence="1">Cytoplasm</location>
    </subcellularLocation>
</comment>
<comment type="similarity">
    <text evidence="1">Belongs to the class-I aminoacyl-tRNA synthetase family. MetG type 1 subfamily.</text>
</comment>
<protein>
    <recommendedName>
        <fullName evidence="1">Methionine--tRNA ligase</fullName>
        <ecNumber evidence="1">6.1.1.10</ecNumber>
    </recommendedName>
    <alternativeName>
        <fullName evidence="1">Methionyl-tRNA synthetase</fullName>
        <shortName evidence="1">MetRS</shortName>
    </alternativeName>
</protein>
<accession>B1IYW7</accession>
<dbReference type="EC" id="6.1.1.10" evidence="1"/>
<dbReference type="EMBL" id="CP000946">
    <property type="protein sequence ID" value="ACA77193.1"/>
    <property type="molecule type" value="Genomic_DNA"/>
</dbReference>
<dbReference type="RefSeq" id="WP_001300883.1">
    <property type="nucleotide sequence ID" value="NZ_MTFT01000031.1"/>
</dbReference>
<dbReference type="SMR" id="B1IYW7"/>
<dbReference type="KEGG" id="ecl:EcolC_1533"/>
<dbReference type="HOGENOM" id="CLU_009710_7_0_6"/>
<dbReference type="GO" id="GO:0005829">
    <property type="term" value="C:cytosol"/>
    <property type="evidence" value="ECO:0007669"/>
    <property type="project" value="TreeGrafter"/>
</dbReference>
<dbReference type="GO" id="GO:0005524">
    <property type="term" value="F:ATP binding"/>
    <property type="evidence" value="ECO:0007669"/>
    <property type="project" value="UniProtKB-UniRule"/>
</dbReference>
<dbReference type="GO" id="GO:0046872">
    <property type="term" value="F:metal ion binding"/>
    <property type="evidence" value="ECO:0007669"/>
    <property type="project" value="UniProtKB-KW"/>
</dbReference>
<dbReference type="GO" id="GO:0004825">
    <property type="term" value="F:methionine-tRNA ligase activity"/>
    <property type="evidence" value="ECO:0007669"/>
    <property type="project" value="UniProtKB-UniRule"/>
</dbReference>
<dbReference type="GO" id="GO:0000049">
    <property type="term" value="F:tRNA binding"/>
    <property type="evidence" value="ECO:0007669"/>
    <property type="project" value="UniProtKB-KW"/>
</dbReference>
<dbReference type="GO" id="GO:0006431">
    <property type="term" value="P:methionyl-tRNA aminoacylation"/>
    <property type="evidence" value="ECO:0007669"/>
    <property type="project" value="UniProtKB-UniRule"/>
</dbReference>
<dbReference type="CDD" id="cd07957">
    <property type="entry name" value="Anticodon_Ia_Met"/>
    <property type="match status" value="1"/>
</dbReference>
<dbReference type="CDD" id="cd00814">
    <property type="entry name" value="MetRS_core"/>
    <property type="match status" value="1"/>
</dbReference>
<dbReference type="CDD" id="cd02800">
    <property type="entry name" value="tRNA_bind_EcMetRS_like"/>
    <property type="match status" value="1"/>
</dbReference>
<dbReference type="FunFam" id="1.10.730.10:FF:000005">
    <property type="entry name" value="Methionine--tRNA ligase"/>
    <property type="match status" value="1"/>
</dbReference>
<dbReference type="FunFam" id="2.20.28.20:FF:000001">
    <property type="entry name" value="Methionine--tRNA ligase"/>
    <property type="match status" value="1"/>
</dbReference>
<dbReference type="FunFam" id="2.40.50.140:FF:000042">
    <property type="entry name" value="Methionine--tRNA ligase"/>
    <property type="match status" value="1"/>
</dbReference>
<dbReference type="Gene3D" id="3.40.50.620">
    <property type="entry name" value="HUPs"/>
    <property type="match status" value="1"/>
</dbReference>
<dbReference type="Gene3D" id="1.10.730.10">
    <property type="entry name" value="Isoleucyl-tRNA Synthetase, Domain 1"/>
    <property type="match status" value="1"/>
</dbReference>
<dbReference type="Gene3D" id="2.20.28.20">
    <property type="entry name" value="Methionyl-tRNA synthetase, Zn-domain"/>
    <property type="match status" value="1"/>
</dbReference>
<dbReference type="Gene3D" id="2.40.50.140">
    <property type="entry name" value="Nucleic acid-binding proteins"/>
    <property type="match status" value="1"/>
</dbReference>
<dbReference type="HAMAP" id="MF_00098">
    <property type="entry name" value="Met_tRNA_synth_type1"/>
    <property type="match status" value="1"/>
</dbReference>
<dbReference type="InterPro" id="IPR001412">
    <property type="entry name" value="aa-tRNA-synth_I_CS"/>
</dbReference>
<dbReference type="InterPro" id="IPR041872">
    <property type="entry name" value="Anticodon_Met"/>
</dbReference>
<dbReference type="InterPro" id="IPR004495">
    <property type="entry name" value="Met-tRNA-synth_bsu_C"/>
</dbReference>
<dbReference type="InterPro" id="IPR023458">
    <property type="entry name" value="Met-tRNA_ligase_1"/>
</dbReference>
<dbReference type="InterPro" id="IPR014758">
    <property type="entry name" value="Met-tRNA_synth"/>
</dbReference>
<dbReference type="InterPro" id="IPR015413">
    <property type="entry name" value="Methionyl/Leucyl_tRNA_Synth"/>
</dbReference>
<dbReference type="InterPro" id="IPR033911">
    <property type="entry name" value="MetRS_core"/>
</dbReference>
<dbReference type="InterPro" id="IPR029038">
    <property type="entry name" value="MetRS_Zn"/>
</dbReference>
<dbReference type="InterPro" id="IPR012340">
    <property type="entry name" value="NA-bd_OB-fold"/>
</dbReference>
<dbReference type="InterPro" id="IPR014729">
    <property type="entry name" value="Rossmann-like_a/b/a_fold"/>
</dbReference>
<dbReference type="InterPro" id="IPR002547">
    <property type="entry name" value="tRNA-bd_dom"/>
</dbReference>
<dbReference type="InterPro" id="IPR009080">
    <property type="entry name" value="tRNAsynth_Ia_anticodon-bd"/>
</dbReference>
<dbReference type="NCBIfam" id="TIGR00398">
    <property type="entry name" value="metG"/>
    <property type="match status" value="1"/>
</dbReference>
<dbReference type="NCBIfam" id="TIGR00399">
    <property type="entry name" value="metG_C_term"/>
    <property type="match status" value="1"/>
</dbReference>
<dbReference type="NCBIfam" id="NF001100">
    <property type="entry name" value="PRK00133.1"/>
    <property type="match status" value="1"/>
</dbReference>
<dbReference type="PANTHER" id="PTHR45765">
    <property type="entry name" value="METHIONINE--TRNA LIGASE"/>
    <property type="match status" value="1"/>
</dbReference>
<dbReference type="PANTHER" id="PTHR45765:SF1">
    <property type="entry name" value="METHIONINE--TRNA LIGASE, CYTOPLASMIC"/>
    <property type="match status" value="1"/>
</dbReference>
<dbReference type="Pfam" id="PF19303">
    <property type="entry name" value="Anticodon_3"/>
    <property type="match status" value="1"/>
</dbReference>
<dbReference type="Pfam" id="PF09334">
    <property type="entry name" value="tRNA-synt_1g"/>
    <property type="match status" value="1"/>
</dbReference>
<dbReference type="Pfam" id="PF01588">
    <property type="entry name" value="tRNA_bind"/>
    <property type="match status" value="1"/>
</dbReference>
<dbReference type="PRINTS" id="PR01041">
    <property type="entry name" value="TRNASYNTHMET"/>
</dbReference>
<dbReference type="SUPFAM" id="SSF47323">
    <property type="entry name" value="Anticodon-binding domain of a subclass of class I aminoacyl-tRNA synthetases"/>
    <property type="match status" value="1"/>
</dbReference>
<dbReference type="SUPFAM" id="SSF57770">
    <property type="entry name" value="Methionyl-tRNA synthetase (MetRS), Zn-domain"/>
    <property type="match status" value="1"/>
</dbReference>
<dbReference type="SUPFAM" id="SSF50249">
    <property type="entry name" value="Nucleic acid-binding proteins"/>
    <property type="match status" value="1"/>
</dbReference>
<dbReference type="SUPFAM" id="SSF52374">
    <property type="entry name" value="Nucleotidylyl transferase"/>
    <property type="match status" value="1"/>
</dbReference>
<dbReference type="PROSITE" id="PS00178">
    <property type="entry name" value="AA_TRNA_LIGASE_I"/>
    <property type="match status" value="1"/>
</dbReference>
<dbReference type="PROSITE" id="PS50886">
    <property type="entry name" value="TRBD"/>
    <property type="match status" value="1"/>
</dbReference>
<organism>
    <name type="scientific">Escherichia coli (strain ATCC 8739 / DSM 1576 / NBRC 3972 / NCIMB 8545 / WDCM 00012 / Crooks)</name>
    <dbReference type="NCBI Taxonomy" id="481805"/>
    <lineage>
        <taxon>Bacteria</taxon>
        <taxon>Pseudomonadati</taxon>
        <taxon>Pseudomonadota</taxon>
        <taxon>Gammaproteobacteria</taxon>
        <taxon>Enterobacterales</taxon>
        <taxon>Enterobacteriaceae</taxon>
        <taxon>Escherichia</taxon>
    </lineage>
</organism>
<evidence type="ECO:0000255" key="1">
    <source>
        <dbReference type="HAMAP-Rule" id="MF_00098"/>
    </source>
</evidence>
<reference key="1">
    <citation type="submission" date="2008-02" db="EMBL/GenBank/DDBJ databases">
        <title>Complete sequence of Escherichia coli C str. ATCC 8739.</title>
        <authorList>
            <person name="Copeland A."/>
            <person name="Lucas S."/>
            <person name="Lapidus A."/>
            <person name="Glavina del Rio T."/>
            <person name="Dalin E."/>
            <person name="Tice H."/>
            <person name="Bruce D."/>
            <person name="Goodwin L."/>
            <person name="Pitluck S."/>
            <person name="Kiss H."/>
            <person name="Brettin T."/>
            <person name="Detter J.C."/>
            <person name="Han C."/>
            <person name="Kuske C.R."/>
            <person name="Schmutz J."/>
            <person name="Larimer F."/>
            <person name="Land M."/>
            <person name="Hauser L."/>
            <person name="Kyrpides N."/>
            <person name="Mikhailova N."/>
            <person name="Ingram L."/>
            <person name="Richardson P."/>
        </authorList>
    </citation>
    <scope>NUCLEOTIDE SEQUENCE [LARGE SCALE GENOMIC DNA]</scope>
    <source>
        <strain>ATCC 8739 / DSM 1576 / NBRC 3972 / NCIMB 8545 / WDCM 00012 / Crooks</strain>
    </source>
</reference>